<keyword id="KW-0002">3D-structure</keyword>
<keyword id="KW-0963">Cytoplasm</keyword>
<keyword id="KW-0539">Nucleus</keyword>
<keyword id="KW-1185">Reference proteome</keyword>
<keyword id="KW-0804">Transcription</keyword>
<keyword id="KW-0805">Transcription regulation</keyword>
<sequence>MRSGDAEIKGIKPKVIEEYSLSQGSGPSNDSWKSLMSSAKDTPLQYDHMNRESLKKYFNPNAQLIEDPLDKPIQYRVCEKCGKPLALTAIVDHLENHCAGASGKSSTDPRDESTRETIRNGVESTGRNNNDDDNSNDNNNDDDDDDDNDDNEDDDDADDDDDNSNGANYKKNDSSFNPLKRSTSMESANTPNMDTKRSKTGTPQTFSSSIKKQKKVKQRNPTEKHLIDFNKQCGVELPEGGYCARSLTCKSHSMGAKRAVSGRSKPYDVLLADYHREHQTKIGAAAEKRAKQQELQKLQKQIQKEQKKHTQQQKQGQRSKQRNVNGGKSAKNGGKSTVHNGNNINEIGHVNLTPEEETTQVLNGVSRSFPLPLESTVLSSVRYRTKYFRMREMFASSFSVKPGYTSPGYGAIHSRVGCLDLDRTTDYKFRVRTPQPINHLTNQNLNPKQIQRLQQQRALQAQLLSQQQQQQQQQQQHHSPQAQAQASTQQPTQGMVPNHFPGGATNSSFNANVSSKQIQQQQQQQQHKSQDTGLTPLEIQSQQQKLRQQQLQQQKFEAAASYLANATKLMQESNQDSHLSGTHNNNSSKNGNNNLMTMKASISSPNTSVNSIQSPPSVNSVNGSGQGVSTGINVSGNNGRIEVGIGNSVNPYNGRIN</sequence>
<comment type="function">
    <text evidence="5 6 7 8 9 12 13 14 15 16">Component of the transcription coactivator SAGA complex. SAGA acts as a general cofactor required for essentially all RNA polymerase II transcription (PubMed:25216679). At the promoters, SAGA is required for transcription pre-initiation complex (PIC) recruitment. It influences RNA polymerase II transcriptional activity through different activities such as TBP interaction (via core/TAF module) and promoter selectivity, interaction with transcription activators (via Tra1/SPT module), and chromatin modification through histone acetylation (via HAT module) and deubiquitination (via DUB module) (PubMed:17090597, PubMed:31969703). SAGA preferentially acetylates histones H3 (to form H3K9ac, H3K14ac, H3K18ac and H3K23ac) and H2B and deubiquitinates histone H2B (PubMed:20395473). SAGA interacts with DNA via upstream activating sequences (UASs) (PubMed:25216679). Also identified in a modified version of SAGA named SALSA or SLIK (PubMed:15932941). The cleavage of SPT7 and the absence of the SPT8 subunit in SLIK neither drive any major conformational differences in its structure compared with SAGA, nor significantly affect HAT, DUB, or DNA-binding activities (PubMed:33864814). SGF73 tethers the DUB module to the rest of the SAGA complex through its central domain and activates the ubiquitin hydrolase UBP8 by maintaining its catalytic domain in an active conformation (PubMed:18488019, PubMed:19226466, PubMed:20395473, PubMed:25526805). SGF73 mediates recruitment of the TREX-2 mRNA export factors SAC3 and THP1 to SAGA, which is crucial to target TREX-2 to the nuclear pore complex (NPC) necessary for export of mRNA (PubMed:18488019). Upon environmental stress, involved in the bypass of the canonical mRNA export process for the immediate export of stress-related transcripts to maintain proteostasis (PubMed:31165730).</text>
</comment>
<comment type="subunit">
    <text evidence="3 5 6 12 15 16">Component of the 1.8 MDa SAGA (Spt-Ada-Gcn5 acetyltransferase) complex, which is composed of 19 subunits TRA1, SPT7, TAF5, NGG1/ADA3, SGF73, SPT20/ADA5, SPT8, TAF12, TAF6, HFI1/ADA1, UBP8, GCN5, ADA2, SPT3, SGF29, TAF10, TAF9, SGF11 and SUS1 (PubMed:12052880, PubMed:17090597, PubMed:31969703). The SAGA complex is composed of 4 modules, namely the HAT (histone acetyltransferase) module (GCN5, ADA2, NGG1/ADA3 and SGF29), the DUB (deubiquitinating) module (UBP8, SGF11, SGF73 and SUS1), the core or TAF (TBP-associated factor) module (TAF5, TAF6, TAF9, TAF10 and TAF12), and the Tra1 or SPT (Suppressor of Ty) module (TRA1, HFI1/ADA1, SPT3, SPT7, SPT8 and SPT20/ADA5). The Tra1/SPT module binds activators, the core module recruits TBP (TATA-binding protein), the HAT module contains the histone H3 acetyltransferase GCN5, and the DUB module comprises the histone H2B deubiquitinase UBP8 (PubMed:25216679, PubMed:31969703). Also identified in an altered form of SAGA, named SALSA (SAGA altered, Spt8 absent) or SLIK (SAGA-like) complex, which contains a C-terminal truncated form of SPT7 and is missing SPT8 (PubMed:15932941). However, it has been shown that the SAGA and SAGA-like SALSA/SLIK transcriptional coactivators are structurally and biochemically equivalent (PubMed:33864814).</text>
</comment>
<comment type="interaction">
    <interactant intactId="EBI-23812">
        <id>P53165</id>
    </interactant>
    <interactant intactId="EBI-17751">
        <id>P50875</id>
        <label>SPT20</label>
    </interactant>
    <organismsDiffer>false</organismsDiffer>
    <experiments>8</experiments>
</comment>
<comment type="subcellular location">
    <subcellularLocation>
        <location evidence="11">Nucleus</location>
    </subcellularLocation>
    <subcellularLocation>
        <location evidence="11">Cytoplasm</location>
    </subcellularLocation>
</comment>
<comment type="miscellaneous">
    <text evidence="4">Present with 486 molecules/cell in log phase SD medium.</text>
</comment>
<comment type="similarity">
    <text evidence="17">Belongs to the ataxin-7 family.</text>
</comment>
<gene>
    <name type="primary">SGF73</name>
    <name type="ordered locus">YGL066W</name>
</gene>
<accession>P53165</accession>
<accession>D6VU75</accession>
<feature type="chain" id="PRO_0000202764" description="SAGA complex subunit SGF73">
    <location>
        <begin position="1"/>
        <end position="657"/>
    </location>
</feature>
<feature type="domain" description="SCA7" evidence="1">
    <location>
        <begin position="220"/>
        <end position="286"/>
    </location>
</feature>
<feature type="region of interest" description="Disordered" evidence="2">
    <location>
        <begin position="98"/>
        <end position="225"/>
    </location>
</feature>
<feature type="region of interest" description="Disordered" evidence="2">
    <location>
        <begin position="287"/>
        <end position="353"/>
    </location>
</feature>
<feature type="region of interest" description="Disordered" evidence="2">
    <location>
        <begin position="469"/>
        <end position="532"/>
    </location>
</feature>
<feature type="region of interest" description="Disordered" evidence="2">
    <location>
        <begin position="572"/>
        <end position="636"/>
    </location>
</feature>
<feature type="compositionally biased region" description="Basic and acidic residues" evidence="2">
    <location>
        <begin position="107"/>
        <end position="118"/>
    </location>
</feature>
<feature type="compositionally biased region" description="Acidic residues" evidence="2">
    <location>
        <begin position="131"/>
        <end position="163"/>
    </location>
</feature>
<feature type="compositionally biased region" description="Polar residues" evidence="2">
    <location>
        <begin position="174"/>
        <end position="193"/>
    </location>
</feature>
<feature type="compositionally biased region" description="Polar residues" evidence="2">
    <location>
        <begin position="200"/>
        <end position="210"/>
    </location>
</feature>
<feature type="compositionally biased region" description="Basic residues" evidence="2">
    <location>
        <begin position="306"/>
        <end position="321"/>
    </location>
</feature>
<feature type="compositionally biased region" description="Low complexity" evidence="2">
    <location>
        <begin position="325"/>
        <end position="336"/>
    </location>
</feature>
<feature type="compositionally biased region" description="Low complexity" evidence="2">
    <location>
        <begin position="469"/>
        <end position="493"/>
    </location>
</feature>
<feature type="compositionally biased region" description="Polar residues" evidence="2">
    <location>
        <begin position="504"/>
        <end position="516"/>
    </location>
</feature>
<feature type="compositionally biased region" description="Low complexity" evidence="2">
    <location>
        <begin position="517"/>
        <end position="526"/>
    </location>
</feature>
<feature type="compositionally biased region" description="Polar residues" evidence="2">
    <location>
        <begin position="572"/>
        <end position="583"/>
    </location>
</feature>
<feature type="compositionally biased region" description="Low complexity" evidence="2">
    <location>
        <begin position="584"/>
        <end position="594"/>
    </location>
</feature>
<feature type="compositionally biased region" description="Polar residues" evidence="2">
    <location>
        <begin position="600"/>
        <end position="636"/>
    </location>
</feature>
<feature type="binding site" evidence="9 10 18 19 20 21 22 23 24 25 26 27">
    <location>
        <position position="78"/>
    </location>
    <ligand>
        <name>Zn(2+)</name>
        <dbReference type="ChEBI" id="CHEBI:29105"/>
    </ligand>
</feature>
<feature type="binding site" evidence="9 10 18 19 20 21 22 23 24 25 26 27">
    <location>
        <position position="81"/>
    </location>
    <ligand>
        <name>Zn(2+)</name>
        <dbReference type="ChEBI" id="CHEBI:29105"/>
    </ligand>
</feature>
<feature type="binding site" evidence="9 10 18 19 20 21 22 23 24 25 26 27">
    <location>
        <position position="93"/>
    </location>
    <ligand>
        <name>Zn(2+)</name>
        <dbReference type="ChEBI" id="CHEBI:29105"/>
    </ligand>
</feature>
<feature type="binding site" evidence="9 10 18 26">
    <location>
        <position position="98"/>
    </location>
    <ligand>
        <name>Zn(2+)</name>
        <dbReference type="ChEBI" id="CHEBI:29105"/>
    </ligand>
</feature>
<feature type="strand" evidence="33">
    <location>
        <begin position="7"/>
        <end position="11"/>
    </location>
</feature>
<feature type="helix" evidence="31">
    <location>
        <begin position="13"/>
        <end position="18"/>
    </location>
</feature>
<feature type="turn" evidence="32">
    <location>
        <begin position="19"/>
        <end position="22"/>
    </location>
</feature>
<feature type="strand" evidence="32">
    <location>
        <begin position="28"/>
        <end position="30"/>
    </location>
</feature>
<feature type="helix" evidence="31">
    <location>
        <begin position="32"/>
        <end position="35"/>
    </location>
</feature>
<feature type="helix" evidence="31">
    <location>
        <begin position="36"/>
        <end position="41"/>
    </location>
</feature>
<feature type="strand" evidence="31">
    <location>
        <begin position="47"/>
        <end position="49"/>
    </location>
</feature>
<feature type="helix" evidence="31">
    <location>
        <begin position="51"/>
        <end position="57"/>
    </location>
</feature>
<feature type="strand" evidence="31">
    <location>
        <begin position="70"/>
        <end position="72"/>
    </location>
</feature>
<feature type="strand" evidence="31">
    <location>
        <begin position="76"/>
        <end position="78"/>
    </location>
</feature>
<feature type="turn" evidence="31">
    <location>
        <begin position="79"/>
        <end position="81"/>
    </location>
</feature>
<feature type="strand" evidence="33">
    <location>
        <begin position="84"/>
        <end position="86"/>
    </location>
</feature>
<feature type="helix" evidence="31">
    <location>
        <begin position="87"/>
        <end position="89"/>
    </location>
</feature>
<feature type="turn" evidence="31">
    <location>
        <begin position="90"/>
        <end position="92"/>
    </location>
</feature>
<feature type="helix" evidence="34">
    <location>
        <begin position="354"/>
        <end position="365"/>
    </location>
</feature>
<feature type="helix" evidence="34">
    <location>
        <begin position="382"/>
        <end position="397"/>
    </location>
</feature>
<feature type="turn" evidence="34">
    <location>
        <begin position="410"/>
        <end position="412"/>
    </location>
</feature>
<feature type="strand" evidence="34">
    <location>
        <begin position="420"/>
        <end position="422"/>
    </location>
</feature>
<name>SGF73_YEAST</name>
<organism>
    <name type="scientific">Saccharomyces cerevisiae (strain ATCC 204508 / S288c)</name>
    <name type="common">Baker's yeast</name>
    <dbReference type="NCBI Taxonomy" id="559292"/>
    <lineage>
        <taxon>Eukaryota</taxon>
        <taxon>Fungi</taxon>
        <taxon>Dikarya</taxon>
        <taxon>Ascomycota</taxon>
        <taxon>Saccharomycotina</taxon>
        <taxon>Saccharomycetes</taxon>
        <taxon>Saccharomycetales</taxon>
        <taxon>Saccharomycetaceae</taxon>
        <taxon>Saccharomyces</taxon>
    </lineage>
</organism>
<evidence type="ECO:0000255" key="1">
    <source>
        <dbReference type="PROSITE-ProRule" id="PRU00838"/>
    </source>
</evidence>
<evidence type="ECO:0000256" key="2">
    <source>
        <dbReference type="SAM" id="MobiDB-lite"/>
    </source>
</evidence>
<evidence type="ECO:0000269" key="3">
    <source>
    </source>
</evidence>
<evidence type="ECO:0000269" key="4">
    <source>
    </source>
</evidence>
<evidence type="ECO:0000269" key="5">
    <source>
    </source>
</evidence>
<evidence type="ECO:0000269" key="6">
    <source>
    </source>
</evidence>
<evidence type="ECO:0000269" key="7">
    <source>
    </source>
</evidence>
<evidence type="ECO:0000269" key="8">
    <source>
    </source>
</evidence>
<evidence type="ECO:0000269" key="9">
    <source>
    </source>
</evidence>
<evidence type="ECO:0000269" key="10">
    <source>
    </source>
</evidence>
<evidence type="ECO:0000269" key="11">
    <source>
    </source>
</evidence>
<evidence type="ECO:0000269" key="12">
    <source>
    </source>
</evidence>
<evidence type="ECO:0000269" key="13">
    <source>
    </source>
</evidence>
<evidence type="ECO:0000269" key="14">
    <source>
    </source>
</evidence>
<evidence type="ECO:0000269" key="15">
    <source>
    </source>
</evidence>
<evidence type="ECO:0000269" key="16">
    <source>
    </source>
</evidence>
<evidence type="ECO:0000305" key="17"/>
<evidence type="ECO:0007744" key="18">
    <source>
        <dbReference type="PDB" id="3M99"/>
    </source>
</evidence>
<evidence type="ECO:0007744" key="19">
    <source>
        <dbReference type="PDB" id="3MHH"/>
    </source>
</evidence>
<evidence type="ECO:0007744" key="20">
    <source>
        <dbReference type="PDB" id="3MHS"/>
    </source>
</evidence>
<evidence type="ECO:0007744" key="21">
    <source>
        <dbReference type="PDB" id="4FIP"/>
    </source>
</evidence>
<evidence type="ECO:0007744" key="22">
    <source>
        <dbReference type="PDB" id="4FJC"/>
    </source>
</evidence>
<evidence type="ECO:0007744" key="23">
    <source>
        <dbReference type="PDB" id="4FK5"/>
    </source>
</evidence>
<evidence type="ECO:0007744" key="24">
    <source>
        <dbReference type="PDB" id="4W4U"/>
    </source>
</evidence>
<evidence type="ECO:0007744" key="25">
    <source>
        <dbReference type="PDB" id="4WA6"/>
    </source>
</evidence>
<evidence type="ECO:0007744" key="26">
    <source>
        <dbReference type="PDB" id="4ZUX"/>
    </source>
</evidence>
<evidence type="ECO:0007744" key="27">
    <source>
        <dbReference type="PDB" id="6AQR"/>
    </source>
</evidence>
<evidence type="ECO:0007744" key="28">
    <source>
        <dbReference type="PDB" id="6T9I"/>
    </source>
</evidence>
<evidence type="ECO:0007744" key="29">
    <source>
        <dbReference type="PDB" id="6T9K"/>
    </source>
</evidence>
<evidence type="ECO:0007744" key="30">
    <source>
        <dbReference type="PDB" id="6T9L"/>
    </source>
</evidence>
<evidence type="ECO:0007829" key="31">
    <source>
        <dbReference type="PDB" id="3MHS"/>
    </source>
</evidence>
<evidence type="ECO:0007829" key="32">
    <source>
        <dbReference type="PDB" id="4FJC"/>
    </source>
</evidence>
<evidence type="ECO:0007829" key="33">
    <source>
        <dbReference type="PDB" id="4FK5"/>
    </source>
</evidence>
<evidence type="ECO:0007829" key="34">
    <source>
        <dbReference type="PDB" id="6T9K"/>
    </source>
</evidence>
<reference key="1">
    <citation type="journal article" date="1997" name="Yeast">
        <title>Sequence analysis of 203 kilobases from Saccharomyces cerevisiae chromosome VII.</title>
        <authorList>
            <person name="Rieger M."/>
            <person name="Brueckner M."/>
            <person name="Schaefer M."/>
            <person name="Mueller-Auer S."/>
        </authorList>
    </citation>
    <scope>NUCLEOTIDE SEQUENCE [GENOMIC DNA]</scope>
    <source>
        <strain>ATCC 204508 / S288c</strain>
    </source>
</reference>
<reference key="2">
    <citation type="journal article" date="1997" name="Yeast">
        <title>The characterization of two new clusters of duplicated genes suggests a 'Lego' organization of the yeast Saccharomyces cerevisiae chromosomes.</title>
        <authorList>
            <person name="Feuermann M."/>
            <person name="de Montigny J."/>
            <person name="Potier S."/>
            <person name="Souciet J.-L."/>
        </authorList>
    </citation>
    <scope>NUCLEOTIDE SEQUENCE [GENOMIC DNA] OF 115-657</scope>
    <source>
        <strain>ATCC 204508 / S288c</strain>
    </source>
</reference>
<reference key="3">
    <citation type="journal article" date="1997" name="Nature">
        <title>The nucleotide sequence of Saccharomyces cerevisiae chromosome VII.</title>
        <authorList>
            <person name="Tettelin H."/>
            <person name="Agostoni-Carbone M.L."/>
            <person name="Albermann K."/>
            <person name="Albers M."/>
            <person name="Arroyo J."/>
            <person name="Backes U."/>
            <person name="Barreiros T."/>
            <person name="Bertani I."/>
            <person name="Bjourson A.J."/>
            <person name="Brueckner M."/>
            <person name="Bruschi C.V."/>
            <person name="Carignani G."/>
            <person name="Castagnoli L."/>
            <person name="Cerdan E."/>
            <person name="Clemente M.L."/>
            <person name="Coblenz A."/>
            <person name="Coglievina M."/>
            <person name="Coissac E."/>
            <person name="Defoor E."/>
            <person name="Del Bino S."/>
            <person name="Delius H."/>
            <person name="Delneri D."/>
            <person name="de Wergifosse P."/>
            <person name="Dujon B."/>
            <person name="Durand P."/>
            <person name="Entian K.-D."/>
            <person name="Eraso P."/>
            <person name="Escribano V."/>
            <person name="Fabiani L."/>
            <person name="Fartmann B."/>
            <person name="Feroli F."/>
            <person name="Feuermann M."/>
            <person name="Frontali L."/>
            <person name="Garcia-Gonzalez M."/>
            <person name="Garcia-Saez M.I."/>
            <person name="Goffeau A."/>
            <person name="Guerreiro P."/>
            <person name="Hani J."/>
            <person name="Hansen M."/>
            <person name="Hebling U."/>
            <person name="Hernandez K."/>
            <person name="Heumann K."/>
            <person name="Hilger F."/>
            <person name="Hofmann B."/>
            <person name="Indge K.J."/>
            <person name="James C.M."/>
            <person name="Klima R."/>
            <person name="Koetter P."/>
            <person name="Kramer B."/>
            <person name="Kramer W."/>
            <person name="Lauquin G."/>
            <person name="Leuther H."/>
            <person name="Louis E.J."/>
            <person name="Maillier E."/>
            <person name="Marconi A."/>
            <person name="Martegani E."/>
            <person name="Mazon M.J."/>
            <person name="Mazzoni C."/>
            <person name="McReynolds A.D.K."/>
            <person name="Melchioretto P."/>
            <person name="Mewes H.-W."/>
            <person name="Minenkova O."/>
            <person name="Mueller-Auer S."/>
            <person name="Nawrocki A."/>
            <person name="Netter P."/>
            <person name="Neu R."/>
            <person name="Nombela C."/>
            <person name="Oliver S.G."/>
            <person name="Panzeri L."/>
            <person name="Paoluzi S."/>
            <person name="Plevani P."/>
            <person name="Portetelle D."/>
            <person name="Portillo F."/>
            <person name="Potier S."/>
            <person name="Purnelle B."/>
            <person name="Rieger M."/>
            <person name="Riles L."/>
            <person name="Rinaldi T."/>
            <person name="Robben J."/>
            <person name="Rodrigues-Pousada C."/>
            <person name="Rodriguez-Belmonte E."/>
            <person name="Rodriguez-Torres A.M."/>
            <person name="Rose M."/>
            <person name="Ruzzi M."/>
            <person name="Saliola M."/>
            <person name="Sanchez-Perez M."/>
            <person name="Schaefer B."/>
            <person name="Schaefer M."/>
            <person name="Scharfe M."/>
            <person name="Schmidheini T."/>
            <person name="Schreer A."/>
            <person name="Skala J."/>
            <person name="Souciet J.-L."/>
            <person name="Steensma H.Y."/>
            <person name="Talla E."/>
            <person name="Thierry A."/>
            <person name="Vandenbol M."/>
            <person name="van der Aart Q.J.M."/>
            <person name="Van Dyck L."/>
            <person name="Vanoni M."/>
            <person name="Verhasselt P."/>
            <person name="Voet M."/>
            <person name="Volckaert G."/>
            <person name="Wambutt R."/>
            <person name="Watson M.D."/>
            <person name="Weber N."/>
            <person name="Wedler E."/>
            <person name="Wedler H."/>
            <person name="Wipfli P."/>
            <person name="Wolf K."/>
            <person name="Wright L.F."/>
            <person name="Zaccaria P."/>
            <person name="Zimmermann M."/>
            <person name="Zollner A."/>
            <person name="Kleine K."/>
        </authorList>
    </citation>
    <scope>NUCLEOTIDE SEQUENCE [LARGE SCALE GENOMIC DNA]</scope>
    <source>
        <strain>ATCC 204508 / S288c</strain>
    </source>
</reference>
<reference key="4">
    <citation type="journal article" date="2014" name="G3 (Bethesda)">
        <title>The reference genome sequence of Saccharomyces cerevisiae: Then and now.</title>
        <authorList>
            <person name="Engel S.R."/>
            <person name="Dietrich F.S."/>
            <person name="Fisk D.G."/>
            <person name="Binkley G."/>
            <person name="Balakrishnan R."/>
            <person name="Costanzo M.C."/>
            <person name="Dwight S.S."/>
            <person name="Hitz B.C."/>
            <person name="Karra K."/>
            <person name="Nash R.S."/>
            <person name="Weng S."/>
            <person name="Wong E.D."/>
            <person name="Lloyd P."/>
            <person name="Skrzypek M.S."/>
            <person name="Miyasato S.R."/>
            <person name="Simison M."/>
            <person name="Cherry J.M."/>
        </authorList>
    </citation>
    <scope>GENOME REANNOTATION</scope>
    <source>
        <strain>ATCC 204508 / S288c</strain>
    </source>
</reference>
<reference key="5">
    <citation type="journal article" date="2002" name="Mol. Cell. Biol.">
        <title>Proteomics of the eukaryotic transcription machinery: identification of proteins associated with components of yeast TFIID by multidimensional mass spectrometry.</title>
        <authorList>
            <person name="Sanders S.L."/>
            <person name="Jennings J."/>
            <person name="Canutescu A."/>
            <person name="Link A.J."/>
            <person name="Weil P.A."/>
        </authorList>
    </citation>
    <scope>IDENTIFICATION IN THE SAGA COMPLEX</scope>
</reference>
<reference key="6">
    <citation type="journal article" date="2003" name="Nature">
        <title>Global analysis of protein expression in yeast.</title>
        <authorList>
            <person name="Ghaemmaghami S."/>
            <person name="Huh W.-K."/>
            <person name="Bower K."/>
            <person name="Howson R.W."/>
            <person name="Belle A."/>
            <person name="Dephoure N."/>
            <person name="O'Shea E.K."/>
            <person name="Weissman J.S."/>
        </authorList>
    </citation>
    <scope>LEVEL OF PROTEIN EXPRESSION [LARGE SCALE ANALYSIS]</scope>
</reference>
<reference key="7">
    <citation type="journal article" date="2005" name="Proc. Natl. Acad. Sci. U.S.A.">
        <title>Polyglutamine-expanded spinocerebellar ataxia-7 protein disrupts normal SAGA and SLIK histone acetyltransferase activity.</title>
        <authorList>
            <person name="McMahon S.J."/>
            <person name="Pray-Grant M.G."/>
            <person name="Schieltz D."/>
            <person name="Yates J.R. III"/>
            <person name="Grant P.A."/>
        </authorList>
    </citation>
    <scope>IDENTIFICATION IN THE SLIK COMPLEX</scope>
</reference>
<reference key="8">
    <citation type="journal article" date="2006" name="Nucleic Acids Res.">
        <title>SAGA-associated Sgf73p facilitates formation of the preinitiation complex assembly at the promoters either in a HAT-dependent or independent manner in vivo.</title>
        <authorList>
            <person name="Shukla A."/>
            <person name="Bajwa P."/>
            <person name="Bhaumik S.R."/>
        </authorList>
    </citation>
    <scope>IDENTIFICATION IN THE SAGA COMPLEX</scope>
</reference>
<reference key="9">
    <citation type="journal article" date="2008" name="Mol. Cell. Proteomics">
        <title>A multidimensional chromatography technology for in-depth phosphoproteome analysis.</title>
        <authorList>
            <person name="Albuquerque C.P."/>
            <person name="Smolka M.B."/>
            <person name="Payne S.H."/>
            <person name="Bafna V."/>
            <person name="Eng J."/>
            <person name="Zhou H."/>
        </authorList>
    </citation>
    <scope>IDENTIFICATION BY MASS SPECTROMETRY [LARGE SCALE ANALYSIS]</scope>
</reference>
<reference key="10">
    <citation type="journal article" date="2008" name="Nat. Cell Biol.">
        <title>Yeast Ataxin-7 links histone deubiquitination with gene gating and mRNA export.</title>
        <authorList>
            <person name="Koehler A."/>
            <person name="Schneider M."/>
            <person name="Cabal G.G."/>
            <person name="Nehrbass U."/>
            <person name="Hurt E."/>
        </authorList>
    </citation>
    <scope>FUNCTION</scope>
</reference>
<reference key="11">
    <citation type="journal article" date="2009" name="Epigenetics Chromatin">
        <title>Yeast Sgf73/Ataxin-7 serves to anchor the deubiquitination module into both SAGA and Slik(SALSA) HAT complexes.</title>
        <authorList>
            <person name="Lee K.K."/>
            <person name="Swanson S.K."/>
            <person name="Florens L."/>
            <person name="Washburn M.P."/>
            <person name="Workman J.L."/>
        </authorList>
    </citation>
    <scope>FUNCTION</scope>
</reference>
<reference key="12">
    <citation type="journal article" date="2009" name="Science">
        <title>Global analysis of Cdk1 substrate phosphorylation sites provides insights into evolution.</title>
        <authorList>
            <person name="Holt L.J."/>
            <person name="Tuch B.B."/>
            <person name="Villen J."/>
            <person name="Johnson A.D."/>
            <person name="Gygi S.P."/>
            <person name="Morgan D.O."/>
        </authorList>
    </citation>
    <scope>IDENTIFICATION BY MASS SPECTROMETRY [LARGE SCALE ANALYSIS]</scope>
</reference>
<reference key="13">
    <citation type="journal article" date="2012" name="Cell Biosci.">
        <title>The nuclear localization of SWI/SNF proteins is subjected to oxygen regulation.</title>
        <authorList>
            <person name="Dastidar R.G."/>
            <person name="Hooda J."/>
            <person name="Shah A."/>
            <person name="Cao T.M."/>
            <person name="Henke R.M."/>
            <person name="Zhang L."/>
        </authorList>
    </citation>
    <scope>SUBCELLULAR LOCATION</scope>
</reference>
<reference key="14">
    <citation type="journal article" date="2014" name="EMBO J.">
        <title>Architecture of the Saccharomyces cerevisiae SAGA transcription coactivator complex.</title>
        <authorList>
            <person name="Han Y."/>
            <person name="Luo J."/>
            <person name="Ranish J."/>
            <person name="Hahn S."/>
        </authorList>
    </citation>
    <scope>SUBUNIT</scope>
</reference>
<reference key="15">
    <citation type="journal article" date="2017" name="Mol. Cell">
        <title>SAGA is a general cofactor for RNA polymerase II transcription.</title>
        <authorList>
            <person name="Baptista T."/>
            <person name="Gruenberg S."/>
            <person name="Minoungou N."/>
            <person name="Koster M.J.E."/>
            <person name="Timmers H.T.M."/>
            <person name="Hahn S."/>
            <person name="Devys D."/>
            <person name="Tora L."/>
        </authorList>
    </citation>
    <scope>FUNCTION</scope>
</reference>
<reference key="16">
    <citation type="journal article" date="2019" name="Nat. Commun.">
        <title>SAGA DUBm-mediated surveillance regulates prompt export of stress-inducible transcripts for proteostasis.</title>
        <authorList>
            <person name="Kim M."/>
            <person name="Choi Y."/>
            <person name="Kim H."/>
            <person name="Lee D."/>
        </authorList>
    </citation>
    <scope>FUNCTION</scope>
</reference>
<reference key="17">
    <citation type="journal article" date="2021" name="J. Biol. Chem.">
        <title>SAGA and SAGA-like SLIK transcriptional coactivators are structurally and biochemically equivalent.</title>
        <authorList>
            <person name="Adamus K."/>
            <person name="Reboul C."/>
            <person name="Voss J."/>
            <person name="Huang C."/>
            <person name="Schittenhelm R.B."/>
            <person name="Le S.N."/>
            <person name="Ellisdon A.M."/>
            <person name="Elmlund H."/>
            <person name="Boudes M."/>
            <person name="Elmlund D."/>
        </authorList>
    </citation>
    <scope>FUNCTION</scope>
    <scope>SUBUNIT</scope>
</reference>
<reference key="18">
    <citation type="journal article" date="2004" name="Mol. Cell">
        <title>Molecular architecture of the S. cerevisiae SAGA complex.</title>
        <authorList>
            <person name="Wu P.Y."/>
            <person name="Ruhlmann C."/>
            <person name="Winston F."/>
            <person name="Schultz P."/>
        </authorList>
    </citation>
    <scope>3D-STRUCTURE MODELING OF THE SAGA COMPLEX</scope>
</reference>
<reference evidence="18" key="19">
    <citation type="journal article" date="2010" name="Cell">
        <title>Structural basis for assembly and activation of the heterotetrameric SAGA histone H2B deubiquitinase module.</title>
        <authorList>
            <person name="Kohler A."/>
            <person name="Zimmerman E."/>
            <person name="Schneider M."/>
            <person name="Hurt E."/>
            <person name="Zheng N."/>
        </authorList>
    </citation>
    <scope>X-RAY CRYSTALLOGRAPHY (2.70 ANGSTROMS) OF 1-104 IN COMPLEX WITH ZN(2+)</scope>
</reference>
<reference evidence="19 20" key="20">
    <citation type="journal article" date="2010" name="Science">
        <title>Structural insights into the assembly and function of the SAGA deubiquitinating module.</title>
        <authorList>
            <person name="Samara N.L."/>
            <person name="Datta A.B."/>
            <person name="Berndsen C.E."/>
            <person name="Zhang X."/>
            <person name="Yao T."/>
            <person name="Cohen R.E."/>
            <person name="Wolberger C."/>
        </authorList>
    </citation>
    <scope>X-RAY CRYSTALLOGRAPHY (1.89 ANGSTROMS) OF 1-96 IN COMPLEX WITH ZN(2+)</scope>
</reference>
<reference evidence="21 22 23" key="21">
    <citation type="journal article" date="2012" name="Structure">
        <title>A role for intersubunit interactions in maintaining SAGA deubiquitinating module structure and activity.</title>
        <authorList>
            <person name="Samara N.L."/>
            <person name="Ringel A.E."/>
            <person name="Wolberger C."/>
        </authorList>
    </citation>
    <scope>X-RAY CRYSTALLOGRAPHY (2.03 ANGSTROMS) OF 1-96 IN COMPLEX WITH ZN(2+)</scope>
</reference>
<reference evidence="24" key="22">
    <citation type="journal article" date="2015" name="J. Mol. Biol.">
        <title>Uncovering the role of Sgf73 in maintaining SAGA deubiquitinating module structure and activity.</title>
        <authorList>
            <person name="Yan M."/>
            <person name="Wolberger C."/>
        </authorList>
    </citation>
    <scope>X-RAY CRYSTALLOGRAPHY (2.80 ANGSTROMS) OF 1-96 IN COMPLEX WITH ZN(2+)</scope>
    <scope>FUNCTION</scope>
</reference>
<reference evidence="26" key="23">
    <citation type="journal article" date="2016" name="Science">
        <title>Structural basis for histone H2B deubiquitination by the SAGA DUB module.</title>
        <authorList>
            <person name="Morgan M.T."/>
            <person name="Haj-Yahya M."/>
            <person name="Ringel A.E."/>
            <person name="Bandi P."/>
            <person name="Brik A."/>
            <person name="Wolberger C."/>
        </authorList>
    </citation>
    <scope>X-RAY CRYSTALLOGRAPHY (3.82 ANGSTROMS) OF 1-104 IN COMPLEX WITH ZN(2+)</scope>
</reference>
<reference evidence="28 29 30" key="24">
    <citation type="journal article" date="2020" name="Nature">
        <title>Structure of the transcription coactivator SAGA.</title>
        <authorList>
            <person name="Wang H."/>
            <person name="Dienemann C."/>
            <person name="Stutzer A."/>
            <person name="Urlaub H."/>
            <person name="Cheung A.C.M."/>
            <person name="Cramer P."/>
        </authorList>
    </citation>
    <scope>STRUCTURE BY ELECTRON MICROSCOPY (3.30 ANGSTROMS) IN THE SAGA COMPLEX</scope>
</reference>
<dbReference type="EMBL" id="Z72588">
    <property type="protein sequence ID" value="CAA96770.1"/>
    <property type="molecule type" value="Genomic_DNA"/>
</dbReference>
<dbReference type="EMBL" id="Z72587">
    <property type="protein sequence ID" value="CAA96769.1"/>
    <property type="molecule type" value="Genomic_DNA"/>
</dbReference>
<dbReference type="EMBL" id="BK006941">
    <property type="protein sequence ID" value="DAA08036.1"/>
    <property type="molecule type" value="Genomic_DNA"/>
</dbReference>
<dbReference type="PIR" id="S64073">
    <property type="entry name" value="S64073"/>
</dbReference>
<dbReference type="RefSeq" id="NP_011449.1">
    <property type="nucleotide sequence ID" value="NM_001180931.1"/>
</dbReference>
<dbReference type="PDB" id="2LO3">
    <property type="method" value="NMR"/>
    <property type="chains" value="A=59-102"/>
</dbReference>
<dbReference type="PDB" id="3M99">
    <property type="method" value="X-ray"/>
    <property type="resolution" value="2.70 A"/>
    <property type="chains" value="D=1-104"/>
</dbReference>
<dbReference type="PDB" id="3MHH">
    <property type="method" value="X-ray"/>
    <property type="resolution" value="2.45 A"/>
    <property type="chains" value="E=1-96"/>
</dbReference>
<dbReference type="PDB" id="3MHS">
    <property type="method" value="X-ray"/>
    <property type="resolution" value="1.89 A"/>
    <property type="chains" value="E=1-96"/>
</dbReference>
<dbReference type="PDB" id="4FIP">
    <property type="method" value="X-ray"/>
    <property type="resolution" value="2.69 A"/>
    <property type="chains" value="D/H=1-96"/>
</dbReference>
<dbReference type="PDB" id="4FJC">
    <property type="method" value="X-ray"/>
    <property type="resolution" value="2.83 A"/>
    <property type="chains" value="D/H=1-96"/>
</dbReference>
<dbReference type="PDB" id="4FK5">
    <property type="method" value="X-ray"/>
    <property type="resolution" value="2.03 A"/>
    <property type="chains" value="E=1-96"/>
</dbReference>
<dbReference type="PDB" id="4W4U">
    <property type="method" value="X-ray"/>
    <property type="resolution" value="2.80 A"/>
    <property type="chains" value="E/H=1-96"/>
</dbReference>
<dbReference type="PDB" id="4WA6">
    <property type="method" value="X-ray"/>
    <property type="resolution" value="2.36 A"/>
    <property type="chains" value="E/H=1-96"/>
</dbReference>
<dbReference type="PDB" id="4ZUX">
    <property type="method" value="X-ray"/>
    <property type="resolution" value="3.82 A"/>
    <property type="chains" value="Y/d/i/n=1-104"/>
</dbReference>
<dbReference type="PDB" id="6AQR">
    <property type="method" value="X-ray"/>
    <property type="resolution" value="2.10 A"/>
    <property type="chains" value="E=1-96"/>
</dbReference>
<dbReference type="PDB" id="6T9I">
    <property type="method" value="EM"/>
    <property type="resolution" value="3.90 A"/>
    <property type="chains" value="Q=1-657"/>
</dbReference>
<dbReference type="PDB" id="6T9K">
    <property type="method" value="EM"/>
    <property type="resolution" value="3.30 A"/>
    <property type="chains" value="Q=1-657"/>
</dbReference>
<dbReference type="PDB" id="6T9L">
    <property type="method" value="EM"/>
    <property type="resolution" value="3.60 A"/>
    <property type="chains" value="N=1-657"/>
</dbReference>
<dbReference type="PDBsum" id="2LO3"/>
<dbReference type="PDBsum" id="3M99"/>
<dbReference type="PDBsum" id="3MHH"/>
<dbReference type="PDBsum" id="3MHS"/>
<dbReference type="PDBsum" id="4FIP"/>
<dbReference type="PDBsum" id="4FJC"/>
<dbReference type="PDBsum" id="4FK5"/>
<dbReference type="PDBsum" id="4W4U"/>
<dbReference type="PDBsum" id="4WA6"/>
<dbReference type="PDBsum" id="4ZUX"/>
<dbReference type="PDBsum" id="6AQR"/>
<dbReference type="PDBsum" id="6T9I"/>
<dbReference type="PDBsum" id="6T9K"/>
<dbReference type="PDBsum" id="6T9L"/>
<dbReference type="BMRB" id="P53165"/>
<dbReference type="EMDB" id="EMD-10412"/>
<dbReference type="EMDB" id="EMD-10414"/>
<dbReference type="EMDB" id="EMD-10415"/>
<dbReference type="SMR" id="P53165"/>
<dbReference type="BioGRID" id="33181">
    <property type="interactions" value="721"/>
</dbReference>
<dbReference type="ComplexPortal" id="CPX-656">
    <property type="entry name" value="SAGA complex"/>
</dbReference>
<dbReference type="ComplexPortal" id="CPX-675">
    <property type="entry name" value="SLIK (SAGA-like) complex"/>
</dbReference>
<dbReference type="DIP" id="DIP-5211N"/>
<dbReference type="FunCoup" id="P53165">
    <property type="interactions" value="518"/>
</dbReference>
<dbReference type="IntAct" id="P53165">
    <property type="interactions" value="100"/>
</dbReference>
<dbReference type="MINT" id="P53165"/>
<dbReference type="STRING" id="4932.YGL066W"/>
<dbReference type="iPTMnet" id="P53165"/>
<dbReference type="PaxDb" id="4932-YGL066W"/>
<dbReference type="PeptideAtlas" id="P53165"/>
<dbReference type="EnsemblFungi" id="YGL066W_mRNA">
    <property type="protein sequence ID" value="YGL066W"/>
    <property type="gene ID" value="YGL066W"/>
</dbReference>
<dbReference type="GeneID" id="852814"/>
<dbReference type="KEGG" id="sce:YGL066W"/>
<dbReference type="AGR" id="SGD:S000003034"/>
<dbReference type="SGD" id="S000003034">
    <property type="gene designation" value="SGF73"/>
</dbReference>
<dbReference type="VEuPathDB" id="FungiDB:YGL066W"/>
<dbReference type="eggNOG" id="KOG4140">
    <property type="taxonomic scope" value="Eukaryota"/>
</dbReference>
<dbReference type="GeneTree" id="ENSGT00940000173477"/>
<dbReference type="HOGENOM" id="CLU_032226_0_0_1"/>
<dbReference type="InParanoid" id="P53165"/>
<dbReference type="OMA" id="EHQTKIG"/>
<dbReference type="OrthoDB" id="21678at2759"/>
<dbReference type="BioCyc" id="YEAST:G3O-30571-MONOMER"/>
<dbReference type="BioGRID-ORCS" id="852814">
    <property type="hits" value="2 hits in 10 CRISPR screens"/>
</dbReference>
<dbReference type="EvolutionaryTrace" id="P53165"/>
<dbReference type="PRO" id="PR:P53165"/>
<dbReference type="Proteomes" id="UP000002311">
    <property type="component" value="Chromosome VII"/>
</dbReference>
<dbReference type="RNAct" id="P53165">
    <property type="molecule type" value="protein"/>
</dbReference>
<dbReference type="GO" id="GO:0005829">
    <property type="term" value="C:cytosol"/>
    <property type="evidence" value="ECO:0000314"/>
    <property type="project" value="SGD"/>
</dbReference>
<dbReference type="GO" id="GO:0071819">
    <property type="term" value="C:DUBm complex"/>
    <property type="evidence" value="ECO:0000314"/>
    <property type="project" value="SGD"/>
</dbReference>
<dbReference type="GO" id="GO:0005634">
    <property type="term" value="C:nucleus"/>
    <property type="evidence" value="ECO:0000314"/>
    <property type="project" value="SGD"/>
</dbReference>
<dbReference type="GO" id="GO:0000124">
    <property type="term" value="C:SAGA complex"/>
    <property type="evidence" value="ECO:0000314"/>
    <property type="project" value="SGD"/>
</dbReference>
<dbReference type="GO" id="GO:0046695">
    <property type="term" value="C:SLIK (SAGA-like) complex"/>
    <property type="evidence" value="ECO:0000353"/>
    <property type="project" value="SGD"/>
</dbReference>
<dbReference type="GO" id="GO:0008047">
    <property type="term" value="F:enzyme activator activity"/>
    <property type="evidence" value="ECO:0000314"/>
    <property type="project" value="SGD"/>
</dbReference>
<dbReference type="GO" id="GO:0005198">
    <property type="term" value="F:structural molecule activity"/>
    <property type="evidence" value="ECO:0000315"/>
    <property type="project" value="SGD"/>
</dbReference>
<dbReference type="GO" id="GO:0006325">
    <property type="term" value="P:chromatin organization"/>
    <property type="evidence" value="ECO:0000315"/>
    <property type="project" value="SGD"/>
</dbReference>
<dbReference type="GO" id="GO:0006338">
    <property type="term" value="P:chromatin remodeling"/>
    <property type="evidence" value="ECO:0007669"/>
    <property type="project" value="GOC"/>
</dbReference>
<dbReference type="GO" id="GO:0006406">
    <property type="term" value="P:mRNA export from nucleus"/>
    <property type="evidence" value="ECO:0000315"/>
    <property type="project" value="SGD"/>
</dbReference>
<dbReference type="GO" id="GO:0045899">
    <property type="term" value="P:positive regulation of RNA polymerase II transcription preinitiation complex assembly"/>
    <property type="evidence" value="ECO:0000315"/>
    <property type="project" value="SGD"/>
</dbReference>
<dbReference type="GO" id="GO:0065003">
    <property type="term" value="P:protein-containing complex assembly"/>
    <property type="evidence" value="ECO:0000315"/>
    <property type="project" value="SGD"/>
</dbReference>
<dbReference type="GO" id="GO:0046822">
    <property type="term" value="P:regulation of nucleocytoplasmic transport"/>
    <property type="evidence" value="ECO:0000314"/>
    <property type="project" value="SGD"/>
</dbReference>
<dbReference type="GO" id="GO:1905634">
    <property type="term" value="P:regulation of protein localization to chromatin"/>
    <property type="evidence" value="ECO:0000314"/>
    <property type="project" value="SGD"/>
</dbReference>
<dbReference type="GO" id="GO:0006357">
    <property type="term" value="P:regulation of transcription by RNA polymerase II"/>
    <property type="evidence" value="ECO:0000314"/>
    <property type="project" value="ComplexPortal"/>
</dbReference>
<dbReference type="GO" id="GO:1904802">
    <property type="term" value="P:RITS complex assembly"/>
    <property type="evidence" value="ECO:0000318"/>
    <property type="project" value="GO_Central"/>
</dbReference>
<dbReference type="Gene3D" id="6.10.140.670">
    <property type="match status" value="1"/>
</dbReference>
<dbReference type="Gene3D" id="3.30.160.60">
    <property type="entry name" value="Classic Zinc Finger"/>
    <property type="match status" value="1"/>
</dbReference>
<dbReference type="InterPro" id="IPR013243">
    <property type="entry name" value="SCA7_dom"/>
</dbReference>
<dbReference type="InterPro" id="IPR037804">
    <property type="entry name" value="SGF73"/>
</dbReference>
<dbReference type="InterPro" id="IPR041251">
    <property type="entry name" value="Znf_C2H2_13"/>
</dbReference>
<dbReference type="PANTHER" id="PTHR47805">
    <property type="entry name" value="SAGA-ASSOCIATED FACTOR 73"/>
    <property type="match status" value="1"/>
</dbReference>
<dbReference type="PANTHER" id="PTHR47805:SF1">
    <property type="entry name" value="SAGA-ASSOCIATED FACTOR 73"/>
    <property type="match status" value="1"/>
</dbReference>
<dbReference type="Pfam" id="PF08313">
    <property type="entry name" value="SCA7"/>
    <property type="match status" value="1"/>
</dbReference>
<dbReference type="Pfam" id="PF18508">
    <property type="entry name" value="zf_C2H2_13"/>
    <property type="match status" value="1"/>
</dbReference>
<dbReference type="PROSITE" id="PS51505">
    <property type="entry name" value="SCA7"/>
    <property type="match status" value="1"/>
</dbReference>
<proteinExistence type="evidence at protein level"/>
<protein>
    <recommendedName>
        <fullName>SAGA complex subunit SGF73</fullName>
    </recommendedName>
    <alternativeName>
        <fullName>73 kDa SAGA-associated factor</fullName>
    </alternativeName>
    <alternativeName>
        <fullName>SAGA histone acetyltransferase complex 73 kDa subunit</fullName>
    </alternativeName>
    <alternativeName>
        <fullName>SAGA-associated factor 73</fullName>
    </alternativeName>
</protein>